<name>SHRM4_MOUSE</name>
<comment type="function">
    <text evidence="6">Probable regulator of cytoskeletal architecture that plays an important role in development. May regulate cellular and cytoskeletal architecture by modulating the spatial distribution of myosin II.</text>
</comment>
<comment type="subunit">
    <text evidence="6">Interacts directly with F-actin.</text>
</comment>
<comment type="subcellular location">
    <subcellularLocation>
        <location evidence="6">Cytoplasm</location>
        <location evidence="6">Cytoskeleton</location>
    </subcellularLocation>
    <text>Shows partial colocalization with the cytoplasmic pool of F-actin.</text>
</comment>
<comment type="alternative products">
    <event type="alternative splicing"/>
    <isoform>
        <id>Q1W617-1</id>
        <name>1</name>
        <sequence type="displayed"/>
    </isoform>
    <isoform>
        <id>Q1W617-2</id>
        <name>2</name>
        <sequence type="described" ref="VSP_025291"/>
    </isoform>
</comment>
<comment type="tissue specificity">
    <text evidence="5 6">Detected in most adult tissues examined. Expressed in brain, lung, heart, liver, kidney, muscle and ovary. Expressed throughout the brain, with high expression in the brain stem and cerebellum and weaker expression in the hypothalamus, the hippocampus and the olfactory bulb. Expressed in wide range of cell types during development, including vascular endothelium and the polarized epithelium of the neural tube and kidney.</text>
</comment>
<comment type="developmental stage">
    <text evidence="5">Slight expression at 8.5 dpc, increasing till 11.5 dpc and remaining continuous thereafter, suggesting regulated expression during development.</text>
</comment>
<comment type="similarity">
    <text evidence="8">Belongs to the shroom family.</text>
</comment>
<comment type="sequence caution" evidence="8">
    <conflict type="erroneous initiation">
        <sequence resource="EMBL-CDS" id="BAD32407"/>
    </conflict>
</comment>
<gene>
    <name type="primary">Shroom4</name>
    <name type="synonym">Kiaa1202</name>
</gene>
<reference key="1">
    <citation type="journal article" date="2007" name="Cell Motil. Cytoskeleton">
        <title>Shroom4 (Kiaa1202) is an actin-associated protein implicated in cytoskeletal organization.</title>
        <authorList>
            <person name="Yoder M."/>
            <person name="Hildebrand J.D."/>
        </authorList>
    </citation>
    <scope>NUCLEOTIDE SEQUENCE [MRNA] (ISOFORM 1)</scope>
    <scope>TISSUE SPECIFICITY</scope>
    <scope>INTERACTION WITH F-ACTIN</scope>
    <scope>FUNCTION</scope>
    <scope>SUBCELLULAR LOCATION</scope>
    <source>
        <strain>BALB/cJ</strain>
        <strain>C57BL/6J</strain>
    </source>
</reference>
<reference key="2">
    <citation type="journal article" date="2004" name="DNA Res.">
        <title>Prediction of the coding sequences of mouse homologues of KIAA gene: IV. The complete nucleotide sequences of 500 mouse KIAA-homologous cDNAs identified by screening of terminal sequences of cDNA clones randomly sampled from size-fractionated libraries.</title>
        <authorList>
            <person name="Okazaki N."/>
            <person name="Kikuno R."/>
            <person name="Ohara R."/>
            <person name="Inamoto S."/>
            <person name="Koseki H."/>
            <person name="Hiraoka S."/>
            <person name="Saga Y."/>
            <person name="Seino S."/>
            <person name="Nishimura M."/>
            <person name="Kaisho T."/>
            <person name="Hoshino K."/>
            <person name="Kitamura H."/>
            <person name="Nagase T."/>
            <person name="Ohara O."/>
            <person name="Koga H."/>
        </authorList>
    </citation>
    <scope>NUCLEOTIDE SEQUENCE [LARGE SCALE MRNA] (ISOFORM 2)</scope>
    <source>
        <tissue>Pancreatic islet</tissue>
    </source>
</reference>
<reference key="3">
    <citation type="journal article" date="2009" name="PLoS Biol.">
        <title>Lineage-specific biology revealed by a finished genome assembly of the mouse.</title>
        <authorList>
            <person name="Church D.M."/>
            <person name="Goodstadt L."/>
            <person name="Hillier L.W."/>
            <person name="Zody M.C."/>
            <person name="Goldstein S."/>
            <person name="She X."/>
            <person name="Bult C.J."/>
            <person name="Agarwala R."/>
            <person name="Cherry J.L."/>
            <person name="DiCuccio M."/>
            <person name="Hlavina W."/>
            <person name="Kapustin Y."/>
            <person name="Meric P."/>
            <person name="Maglott D."/>
            <person name="Birtle Z."/>
            <person name="Marques A.C."/>
            <person name="Graves T."/>
            <person name="Zhou S."/>
            <person name="Teague B."/>
            <person name="Potamousis K."/>
            <person name="Churas C."/>
            <person name="Place M."/>
            <person name="Herschleb J."/>
            <person name="Runnheim R."/>
            <person name="Forrest D."/>
            <person name="Amos-Landgraf J."/>
            <person name="Schwartz D.C."/>
            <person name="Cheng Z."/>
            <person name="Lindblad-Toh K."/>
            <person name="Eichler E.E."/>
            <person name="Ponting C.P."/>
        </authorList>
    </citation>
    <scope>NUCLEOTIDE SEQUENCE [LARGE SCALE GENOMIC DNA]</scope>
    <source>
        <strain>C57BL/6J</strain>
    </source>
</reference>
<reference key="4">
    <citation type="journal article" date="2004" name="Genome Res.">
        <title>The status, quality, and expansion of the NIH full-length cDNA project: the Mammalian Gene Collection (MGC).</title>
        <authorList>
            <consortium name="The MGC Project Team"/>
        </authorList>
    </citation>
    <scope>NUCLEOTIDE SEQUENCE [LARGE SCALE MRNA] (ISOFORM 1)</scope>
    <source>
        <tissue>Brain</tissue>
    </source>
</reference>
<reference key="5">
    <citation type="journal article" date="2006" name="BMC Cell Biol.">
        <title>A new standard nomenclature for proteins related to Apx and Shroom.</title>
        <authorList>
            <person name="Hagens O."/>
            <person name="Ballabio A."/>
            <person name="Kalscheuer V."/>
            <person name="Kraehenbuhl J.-P."/>
            <person name="Schiaffino M.V."/>
            <person name="Smith P."/>
            <person name="Staub O."/>
            <person name="Hildebrand J.D."/>
            <person name="Wallingford J.B."/>
        </authorList>
    </citation>
    <scope>NOMENCLATURE</scope>
</reference>
<reference key="6">
    <citation type="journal article" date="2006" name="Hum. Genet.">
        <title>Disruptions of the novel KIAA1202 gene are associated with X-linked mental retardation.</title>
        <authorList>
            <person name="Hagens O."/>
            <person name="Dubos A."/>
            <person name="Abidi F."/>
            <person name="Barbi G."/>
            <person name="Van Zutven L."/>
            <person name="Hoeltzenbein M."/>
            <person name="Tommerup N."/>
            <person name="Moraine C."/>
            <person name="Fryns J.-P."/>
            <person name="Chelly J."/>
            <person name="van Bokhoven H."/>
            <person name="Gecz J."/>
            <person name="Dollfus H."/>
            <person name="Ropers H.-H."/>
            <person name="Schwartz C.E."/>
            <person name="de Cassia Stocco Dos Santos R."/>
            <person name="Kalscheuer V."/>
            <person name="Hanauer A."/>
        </authorList>
    </citation>
    <scope>TISSUE SPECIFICITY</scope>
    <scope>DEVELOPMENTAL STAGE</scope>
</reference>
<reference key="7">
    <citation type="journal article" date="2010" name="Cell">
        <title>A tissue-specific atlas of mouse protein phosphorylation and expression.</title>
        <authorList>
            <person name="Huttlin E.L."/>
            <person name="Jedrychowski M.P."/>
            <person name="Elias J.E."/>
            <person name="Goswami T."/>
            <person name="Rad R."/>
            <person name="Beausoleil S.A."/>
            <person name="Villen J."/>
            <person name="Haas W."/>
            <person name="Sowa M.E."/>
            <person name="Gygi S.P."/>
        </authorList>
    </citation>
    <scope>PHOSPHORYLATION [LARGE SCALE ANALYSIS] AT SER-412; SER-722 AND SER-1010</scope>
    <scope>IDENTIFICATION BY MASS SPECTROMETRY [LARGE SCALE ANALYSIS]</scope>
    <source>
        <tissue>Brown adipose tissue</tissue>
        <tissue>Heart</tissue>
        <tissue>Kidney</tissue>
        <tissue>Lung</tissue>
    </source>
</reference>
<sequence length="1475" mass="163238">MESRPGSFQYVPVQLQGGAPWGFTLKGGLEHCEPLTVSKIEDGGKAALSQKMRTGDELVNINGTPLYGSRQEALILIKGSFRILKLIVRRRNTPVSRPHSWHVAKLLEGCPDVATTMHFPSEAFSLSWHSGCNTSDVSVQWCPLSRHCSTEKSSSIGSMESLEQPGQPTYEGHLLPIDQNMYPSQRDSAYSSFSASSNASDCALSLKPEEPPSTDCVMPGPGPIKVTDDQANVSENSGSSHSTSEDHVTSTSHASSYSDEGHHSGPAKMARGPPEPPVRSDSLPASRAQLLNGEQHRASEPVDSLPQKEKPGLETVLPPRSSNQFCCLSGQDQVTDEDHQNCELSKPSESSQDDCEHLLIEDSSKALDSPKAHDKGSNKEFGLLKEASADLANTLNFGAIPHLRGTMEHRHSAPEQLLASHLQQVHLDSRGSKGMELPIGQDGHQWTVSPLHNNPKGKKSPSLPTGGTQDQTRKERKTTPLDDKLMASVHQSQSDVLLGEVDGHPNRAGRASSDLTSQQPSATCSSVQQTRDFLSAHKIVDHTEASEEGDNEPKECGRLGGRRSGGPRGRSIQNRRRSERFATNLRNEIQRRKAQLQKSKGPLSQLCDTNEAVEETQEPPESPPLSASNASLLPSYKNVPSPGDKVFNKSMILRARSSECLSQASESSKARGGVEGRMSPGQRSGQSSLALNTWWKASDSSTLDTEKANAHHGVCRGHWRWSPEHNAQPQVALSTEAPSNPDDSKELKTSTPQAGEEAVLMPFADRRKFFEESSKSLSTSHLPGLTTHNNKPFIQRQKPIDQNFQSVSYRDLRCHPLDQSYHSADQSYHAADQSYHSLSPLQSETPTYPECFATKGRDNSLCCKPVHHGDCDYHRTCSHPCSAQGTVRHDPCICCSGEICPALLKRNLLPKCHNCRCHHHQCIRCTGCCHGPQHSAHEDSSMAPGNAWKSRKAAIQEFPVDKWKPITGNRKTSHSGREMAHSKAGFSLSTPFRPCIENPALDLSNYRAVSSLDILGDFKRASNKPEESSVYEDENSVASMPRPLRSRAFSESHISLEPQNTQAWGKHQRESFSKGSETQPDTLGARKKVFPPPRPPPPNWEKYRLFRAAQLQQQQQQQQQQQQQQRCEEEEEKEQEEEGEKEEDLPPQYFSSELTGSCAPNTEEQPQSLKMGHQEASRQGSQSLQEQEAFALHPSNFVPPVRGCTVPQPEKAQHPCYYGTHGLWRTTEQEATVTPKQEFQHFSPPKGASGIPTSYSAYYNISVAKAELLNKLKQQPEMAEAGLGEEGVDYELAQKKIQLIESISRKLSVLREAQRGLLDDINANAALGEEVEANLKAVCKSNEFEKYHLFIGDLDKVVNLLLSLSGRLARVENALNSIDSESNQEKLVLIEKKQQLTNQLADAKELKEHVDGREKLVFGMVSRYLPQDQLQDYQHFVKMKSALIIEQRELEEKIKLGEEQLKCLKESLHLGPSNF</sequence>
<proteinExistence type="evidence at protein level"/>
<feature type="chain" id="PRO_0000287078" description="Protein Shroom4">
    <location>
        <begin position="1"/>
        <end position="1475"/>
    </location>
</feature>
<feature type="domain" description="PDZ" evidence="2">
    <location>
        <begin position="10"/>
        <end position="92"/>
    </location>
</feature>
<feature type="domain" description="ASD2" evidence="3">
    <location>
        <begin position="1190"/>
        <end position="1469"/>
    </location>
</feature>
<feature type="region of interest" description="Disordered" evidence="4">
    <location>
        <begin position="151"/>
        <end position="175"/>
    </location>
</feature>
<feature type="region of interest" description="Disordered" evidence="4">
    <location>
        <begin position="202"/>
        <end position="321"/>
    </location>
</feature>
<feature type="region of interest" description="Disordered" evidence="4">
    <location>
        <begin position="432"/>
        <end position="523"/>
    </location>
</feature>
<feature type="region of interest" description="Disordered" evidence="4">
    <location>
        <begin position="542"/>
        <end position="577"/>
    </location>
</feature>
<feature type="region of interest" description="Disordered" evidence="4">
    <location>
        <begin position="610"/>
        <end position="644"/>
    </location>
</feature>
<feature type="region of interest" description="Disordered" evidence="4">
    <location>
        <begin position="658"/>
        <end position="688"/>
    </location>
</feature>
<feature type="region of interest" description="Disordered" evidence="4">
    <location>
        <begin position="727"/>
        <end position="753"/>
    </location>
</feature>
<feature type="region of interest" description="Disordered" evidence="4">
    <location>
        <begin position="772"/>
        <end position="791"/>
    </location>
</feature>
<feature type="region of interest" description="Disordered" evidence="4">
    <location>
        <begin position="1022"/>
        <end position="1041"/>
    </location>
</feature>
<feature type="region of interest" description="Disordered" evidence="4">
    <location>
        <begin position="1055"/>
        <end position="1185"/>
    </location>
</feature>
<feature type="coiled-coil region" evidence="1">
    <location>
        <begin position="1380"/>
        <end position="1470"/>
    </location>
</feature>
<feature type="compositionally biased region" description="Polar residues" evidence="4">
    <location>
        <begin position="249"/>
        <end position="258"/>
    </location>
</feature>
<feature type="compositionally biased region" description="Basic and acidic residues" evidence="4">
    <location>
        <begin position="294"/>
        <end position="312"/>
    </location>
</feature>
<feature type="compositionally biased region" description="Basic and acidic residues" evidence="4">
    <location>
        <begin position="471"/>
        <end position="485"/>
    </location>
</feature>
<feature type="compositionally biased region" description="Polar residues" evidence="4">
    <location>
        <begin position="513"/>
        <end position="523"/>
    </location>
</feature>
<feature type="compositionally biased region" description="Basic and acidic residues" evidence="4">
    <location>
        <begin position="542"/>
        <end position="557"/>
    </location>
</feature>
<feature type="compositionally biased region" description="Gly residues" evidence="4">
    <location>
        <begin position="558"/>
        <end position="568"/>
    </location>
</feature>
<feature type="compositionally biased region" description="Low complexity" evidence="4">
    <location>
        <begin position="624"/>
        <end position="635"/>
    </location>
</feature>
<feature type="compositionally biased region" description="Low complexity" evidence="4">
    <location>
        <begin position="658"/>
        <end position="667"/>
    </location>
</feature>
<feature type="compositionally biased region" description="Polar residues" evidence="4">
    <location>
        <begin position="727"/>
        <end position="738"/>
    </location>
</feature>
<feature type="compositionally biased region" description="Polar residues" evidence="4">
    <location>
        <begin position="775"/>
        <end position="791"/>
    </location>
</feature>
<feature type="compositionally biased region" description="Pro residues" evidence="4">
    <location>
        <begin position="1090"/>
        <end position="1099"/>
    </location>
</feature>
<feature type="compositionally biased region" description="Low complexity" evidence="4">
    <location>
        <begin position="1110"/>
        <end position="1125"/>
    </location>
</feature>
<feature type="compositionally biased region" description="Acidic residues" evidence="4">
    <location>
        <begin position="1128"/>
        <end position="1145"/>
    </location>
</feature>
<feature type="compositionally biased region" description="Polar residues" evidence="4">
    <location>
        <begin position="1149"/>
        <end position="1168"/>
    </location>
</feature>
<feature type="modified residue" description="Phosphoserine" evidence="9">
    <location>
        <position position="412"/>
    </location>
</feature>
<feature type="modified residue" description="Phosphoserine" evidence="9">
    <location>
        <position position="722"/>
    </location>
</feature>
<feature type="modified residue" description="Phosphoserine" evidence="9">
    <location>
        <position position="1010"/>
    </location>
</feature>
<feature type="splice variant" id="VSP_025291" description="In isoform 2." evidence="7">
    <location>
        <begin position="1"/>
        <end position="116"/>
    </location>
</feature>
<evidence type="ECO:0000255" key="1"/>
<evidence type="ECO:0000255" key="2">
    <source>
        <dbReference type="PROSITE-ProRule" id="PRU00143"/>
    </source>
</evidence>
<evidence type="ECO:0000255" key="3">
    <source>
        <dbReference type="PROSITE-ProRule" id="PRU00638"/>
    </source>
</evidence>
<evidence type="ECO:0000256" key="4">
    <source>
        <dbReference type="SAM" id="MobiDB-lite"/>
    </source>
</evidence>
<evidence type="ECO:0000269" key="5">
    <source>
    </source>
</evidence>
<evidence type="ECO:0000269" key="6">
    <source>
    </source>
</evidence>
<evidence type="ECO:0000303" key="7">
    <source>
    </source>
</evidence>
<evidence type="ECO:0000305" key="8"/>
<evidence type="ECO:0007744" key="9">
    <source>
    </source>
</evidence>
<dbReference type="EMBL" id="DQ435686">
    <property type="protein sequence ID" value="ABD98016.1"/>
    <property type="molecule type" value="mRNA"/>
</dbReference>
<dbReference type="EMBL" id="DQ435687">
    <property type="protein sequence ID" value="ABD98017.1"/>
    <property type="molecule type" value="mRNA"/>
</dbReference>
<dbReference type="EMBL" id="AK173129">
    <property type="protein sequence ID" value="BAD32407.1"/>
    <property type="status" value="ALT_INIT"/>
    <property type="molecule type" value="mRNA"/>
</dbReference>
<dbReference type="EMBL" id="AL671501">
    <property type="status" value="NOT_ANNOTATED_CDS"/>
    <property type="molecule type" value="Genomic_DNA"/>
</dbReference>
<dbReference type="EMBL" id="BC151022">
    <property type="protein sequence ID" value="AAI51023.1"/>
    <property type="molecule type" value="mRNA"/>
</dbReference>
<dbReference type="CCDS" id="CCDS29959.1">
    <molecule id="Q1W617-1"/>
</dbReference>
<dbReference type="CCDS" id="CCDS85744.1">
    <molecule id="Q1W617-2"/>
</dbReference>
<dbReference type="RefSeq" id="NP_001035549.1">
    <molecule id="Q1W617-1"/>
    <property type="nucleotide sequence ID" value="NM_001040459.2"/>
</dbReference>
<dbReference type="RefSeq" id="NP_001300693.1">
    <property type="nucleotide sequence ID" value="NM_001313764.1"/>
</dbReference>
<dbReference type="RefSeq" id="NP_001300694.1">
    <molecule id="Q1W617-2"/>
    <property type="nucleotide sequence ID" value="NM_001313765.1"/>
</dbReference>
<dbReference type="SMR" id="Q1W617"/>
<dbReference type="BioGRID" id="228981">
    <property type="interactions" value="1"/>
</dbReference>
<dbReference type="FunCoup" id="Q1W617">
    <property type="interactions" value="62"/>
</dbReference>
<dbReference type="STRING" id="10090.ENSMUSP00000100070"/>
<dbReference type="GlyGen" id="Q1W617">
    <property type="glycosylation" value="1 site, 1 O-linked glycan (1 site)"/>
</dbReference>
<dbReference type="iPTMnet" id="Q1W617"/>
<dbReference type="PhosphoSitePlus" id="Q1W617"/>
<dbReference type="jPOST" id="Q1W617"/>
<dbReference type="PaxDb" id="10090-ENSMUSP00000100070"/>
<dbReference type="PeptideAtlas" id="Q1W617"/>
<dbReference type="ProteomicsDB" id="257226">
    <molecule id="Q1W617-1"/>
</dbReference>
<dbReference type="ProteomicsDB" id="257227">
    <molecule id="Q1W617-2"/>
</dbReference>
<dbReference type="Pumba" id="Q1W617"/>
<dbReference type="Antibodypedia" id="532">
    <property type="antibodies" value="11 antibodies from 8 providers"/>
</dbReference>
<dbReference type="Ensembl" id="ENSMUST00000089520.3">
    <molecule id="Q1W617-2"/>
    <property type="protein sequence ID" value="ENSMUSP00000086949.3"/>
    <property type="gene ID" value="ENSMUSG00000068270.16"/>
</dbReference>
<dbReference type="Ensembl" id="ENSMUST00000103005.10">
    <molecule id="Q1W617-1"/>
    <property type="protein sequence ID" value="ENSMUSP00000100070.4"/>
    <property type="gene ID" value="ENSMUSG00000068270.16"/>
</dbReference>
<dbReference type="GeneID" id="208431"/>
<dbReference type="KEGG" id="mmu:208431"/>
<dbReference type="UCSC" id="uc009sky.1">
    <molecule id="Q1W617-1"/>
    <property type="organism name" value="mouse"/>
</dbReference>
<dbReference type="AGR" id="MGI:2685570"/>
<dbReference type="CTD" id="57477"/>
<dbReference type="MGI" id="MGI:2685570">
    <property type="gene designation" value="Shroom4"/>
</dbReference>
<dbReference type="VEuPathDB" id="HostDB:ENSMUSG00000068270"/>
<dbReference type="eggNOG" id="ENOG502QUU2">
    <property type="taxonomic scope" value="Eukaryota"/>
</dbReference>
<dbReference type="GeneTree" id="ENSGT00940000159479"/>
<dbReference type="HOGENOM" id="CLU_003220_1_1_1"/>
<dbReference type="InParanoid" id="Q1W617"/>
<dbReference type="OMA" id="LHCSDFD"/>
<dbReference type="OrthoDB" id="10063560at2759"/>
<dbReference type="PhylomeDB" id="Q1W617"/>
<dbReference type="TreeFam" id="TF333370"/>
<dbReference type="BioGRID-ORCS" id="208431">
    <property type="hits" value="2 hits in 78 CRISPR screens"/>
</dbReference>
<dbReference type="ChiTaRS" id="Shroom4">
    <property type="organism name" value="mouse"/>
</dbReference>
<dbReference type="PRO" id="PR:Q1W617"/>
<dbReference type="Proteomes" id="UP000000589">
    <property type="component" value="Chromosome X"/>
</dbReference>
<dbReference type="RNAct" id="Q1W617">
    <property type="molecule type" value="protein"/>
</dbReference>
<dbReference type="Bgee" id="ENSMUSG00000068270">
    <property type="expression patterns" value="Expressed in placenta labyrinth and 180 other cell types or tissues"/>
</dbReference>
<dbReference type="ExpressionAtlas" id="Q1W617">
    <property type="expression patterns" value="baseline and differential"/>
</dbReference>
<dbReference type="GO" id="GO:0015629">
    <property type="term" value="C:actin cytoskeleton"/>
    <property type="evidence" value="ECO:0000314"/>
    <property type="project" value="MGI"/>
</dbReference>
<dbReference type="GO" id="GO:0005884">
    <property type="term" value="C:actin filament"/>
    <property type="evidence" value="ECO:0007669"/>
    <property type="project" value="Ensembl"/>
</dbReference>
<dbReference type="GO" id="GO:0016324">
    <property type="term" value="C:apical plasma membrane"/>
    <property type="evidence" value="ECO:0000314"/>
    <property type="project" value="MGI"/>
</dbReference>
<dbReference type="GO" id="GO:0009925">
    <property type="term" value="C:basal plasma membrane"/>
    <property type="evidence" value="ECO:0000314"/>
    <property type="project" value="MGI"/>
</dbReference>
<dbReference type="GO" id="GO:0005737">
    <property type="term" value="C:cytoplasm"/>
    <property type="evidence" value="ECO:0000314"/>
    <property type="project" value="MGI"/>
</dbReference>
<dbReference type="GO" id="GO:0009898">
    <property type="term" value="C:cytoplasmic side of plasma membrane"/>
    <property type="evidence" value="ECO:0000250"/>
    <property type="project" value="HGNC"/>
</dbReference>
<dbReference type="GO" id="GO:0005925">
    <property type="term" value="C:focal adhesion"/>
    <property type="evidence" value="ECO:0007669"/>
    <property type="project" value="Ensembl"/>
</dbReference>
<dbReference type="GO" id="GO:0098982">
    <property type="term" value="C:GABA-ergic synapse"/>
    <property type="evidence" value="ECO:0007669"/>
    <property type="project" value="Ensembl"/>
</dbReference>
<dbReference type="GO" id="GO:0098978">
    <property type="term" value="C:glutamatergic synapse"/>
    <property type="evidence" value="ECO:0007669"/>
    <property type="project" value="Ensembl"/>
</dbReference>
<dbReference type="GO" id="GO:0005654">
    <property type="term" value="C:nucleoplasm"/>
    <property type="evidence" value="ECO:0007669"/>
    <property type="project" value="Ensembl"/>
</dbReference>
<dbReference type="GO" id="GO:0098794">
    <property type="term" value="C:postsynapse"/>
    <property type="evidence" value="ECO:0007669"/>
    <property type="project" value="Ensembl"/>
</dbReference>
<dbReference type="GO" id="GO:0098793">
    <property type="term" value="C:presynapse"/>
    <property type="evidence" value="ECO:0007669"/>
    <property type="project" value="Ensembl"/>
</dbReference>
<dbReference type="GO" id="GO:0001725">
    <property type="term" value="C:stress fiber"/>
    <property type="evidence" value="ECO:0000314"/>
    <property type="project" value="MGI"/>
</dbReference>
<dbReference type="GO" id="GO:0051015">
    <property type="term" value="F:actin filament binding"/>
    <property type="evidence" value="ECO:0000314"/>
    <property type="project" value="MGI"/>
</dbReference>
<dbReference type="GO" id="GO:0045159">
    <property type="term" value="F:myosin II binding"/>
    <property type="evidence" value="ECO:0000314"/>
    <property type="project" value="MGI"/>
</dbReference>
<dbReference type="GO" id="GO:0007015">
    <property type="term" value="P:actin filament organization"/>
    <property type="evidence" value="ECO:0000314"/>
    <property type="project" value="MGI"/>
</dbReference>
<dbReference type="GO" id="GO:0007420">
    <property type="term" value="P:brain development"/>
    <property type="evidence" value="ECO:0007669"/>
    <property type="project" value="Ensembl"/>
</dbReference>
<dbReference type="GO" id="GO:0050890">
    <property type="term" value="P:cognition"/>
    <property type="evidence" value="ECO:0007669"/>
    <property type="project" value="Ensembl"/>
</dbReference>
<dbReference type="GO" id="GO:0099072">
    <property type="term" value="P:regulation of postsynaptic membrane neurotransmitter receptor levels"/>
    <property type="evidence" value="ECO:0007669"/>
    <property type="project" value="Ensembl"/>
</dbReference>
<dbReference type="CDD" id="cd06750">
    <property type="entry name" value="PDZ_shroom2_3_4-like"/>
    <property type="match status" value="1"/>
</dbReference>
<dbReference type="FunFam" id="2.30.42.10:FF:000100">
    <property type="entry name" value="Shroom family member 2"/>
    <property type="match status" value="1"/>
</dbReference>
<dbReference type="Gene3D" id="2.30.42.10">
    <property type="match status" value="1"/>
</dbReference>
<dbReference type="Gene3D" id="6.10.250.3120">
    <property type="match status" value="1"/>
</dbReference>
<dbReference type="InterPro" id="IPR014799">
    <property type="entry name" value="ASD2_dom"/>
</dbReference>
<dbReference type="InterPro" id="IPR001478">
    <property type="entry name" value="PDZ"/>
</dbReference>
<dbReference type="InterPro" id="IPR036034">
    <property type="entry name" value="PDZ_sf"/>
</dbReference>
<dbReference type="InterPro" id="IPR027685">
    <property type="entry name" value="Shroom_fam"/>
</dbReference>
<dbReference type="PANTHER" id="PTHR15012">
    <property type="entry name" value="APICAL PROTEIN/SHROOM-RELATED"/>
    <property type="match status" value="1"/>
</dbReference>
<dbReference type="PANTHER" id="PTHR15012:SF35">
    <property type="entry name" value="PROTEIN SHROOM4"/>
    <property type="match status" value="1"/>
</dbReference>
<dbReference type="Pfam" id="PF08687">
    <property type="entry name" value="ASD2"/>
    <property type="match status" value="1"/>
</dbReference>
<dbReference type="Pfam" id="PF00595">
    <property type="entry name" value="PDZ"/>
    <property type="match status" value="1"/>
</dbReference>
<dbReference type="SMART" id="SM00228">
    <property type="entry name" value="PDZ"/>
    <property type="match status" value="1"/>
</dbReference>
<dbReference type="SUPFAM" id="SSF50156">
    <property type="entry name" value="PDZ domain-like"/>
    <property type="match status" value="1"/>
</dbReference>
<dbReference type="PROSITE" id="PS51307">
    <property type="entry name" value="ASD2"/>
    <property type="match status" value="1"/>
</dbReference>
<dbReference type="PROSITE" id="PS50106">
    <property type="entry name" value="PDZ"/>
    <property type="match status" value="1"/>
</dbReference>
<accession>Q1W617</accession>
<accession>A2ADV9</accession>
<accession>B2RX74</accession>
<accession>Q69ZN9</accession>
<protein>
    <recommendedName>
        <fullName>Protein Shroom4</fullName>
    </recommendedName>
</protein>
<organism>
    <name type="scientific">Mus musculus</name>
    <name type="common">Mouse</name>
    <dbReference type="NCBI Taxonomy" id="10090"/>
    <lineage>
        <taxon>Eukaryota</taxon>
        <taxon>Metazoa</taxon>
        <taxon>Chordata</taxon>
        <taxon>Craniata</taxon>
        <taxon>Vertebrata</taxon>
        <taxon>Euteleostomi</taxon>
        <taxon>Mammalia</taxon>
        <taxon>Eutheria</taxon>
        <taxon>Euarchontoglires</taxon>
        <taxon>Glires</taxon>
        <taxon>Rodentia</taxon>
        <taxon>Myomorpha</taxon>
        <taxon>Muroidea</taxon>
        <taxon>Muridae</taxon>
        <taxon>Murinae</taxon>
        <taxon>Mus</taxon>
        <taxon>Mus</taxon>
    </lineage>
</organism>
<keyword id="KW-0009">Actin-binding</keyword>
<keyword id="KW-0025">Alternative splicing</keyword>
<keyword id="KW-0175">Coiled coil</keyword>
<keyword id="KW-0963">Cytoplasm</keyword>
<keyword id="KW-0206">Cytoskeleton</keyword>
<keyword id="KW-0217">Developmental protein</keyword>
<keyword id="KW-0597">Phosphoprotein</keyword>
<keyword id="KW-1185">Reference proteome</keyword>